<reference key="1">
    <citation type="submission" date="1995-10" db="EMBL/GenBank/DDBJ databases">
        <authorList>
            <person name="Huang L.N."/>
            <person name="Hseu T.H."/>
            <person name="Lee Y.J."/>
        </authorList>
    </citation>
    <scope>NUCLEOTIDE SEQUENCE [GENOMIC DNA]</scope>
    <source>
        <strain>G-39</strain>
    </source>
</reference>
<accession>P48792</accession>
<proteinExistence type="inferred from homology"/>
<feature type="signal peptide" evidence="1">
    <location>
        <begin position="1"/>
        <end position="21"/>
    </location>
</feature>
<feature type="chain" id="PRO_0000012225" description="Arabinofuranosidase/B-xylosidase">
    <location>
        <begin position="22"/>
        <end position="500"/>
    </location>
</feature>
<feature type="glycosylation site" description="N-linked (GlcNAc...) asparagine" evidence="1">
    <location>
        <position position="467"/>
    </location>
</feature>
<name>XYL1_TRIKO</name>
<sequence length="500" mass="51129">MLSNARIIAAGCIAAGSLVAAGPCDIYSSGGTPCVAAHSTTRALFSAYTGPLYQVKRGSDGATTAISPLSSGVANAAAQDAFCAGTTCLITIIYDQSGRGNHLREAPPGGFSGPESNGYDNLASAIGAPVTLNGQKAYGVFVSPGTGYRNNAASGTAKGDAAEGMYAVLDGTHYNGACCFDYGNAETNSRDTGNGHMEAIYFGDSTVWGTGSGKGPWIMADLENGLFSGSSPGNNAGDPSISYRFVTAAIKGQPNQWAIRGGNAASGSLSTFYSGARPQVSGYNPMSKEGAIILGIGGDNSNGGQGTFYEGVMTSGYPSDATENSVQANIVAARYAVAPLTSGPALTVGSSISLRATTACCTTRYIAHSGSTVNTQVVSSSSATALKQQASWTVRAGLANNACFSFESQDTSGSYIRHSNFGLVLNANDGSKLFAEDATFCTQAGINGQGSSIRSWSYPTRYFRHYNNTLYIASNGGVHVFDATAAFNDDVSFVVSGGFA</sequence>
<keyword id="KW-0119">Carbohydrate metabolism</keyword>
<keyword id="KW-0325">Glycoprotein</keyword>
<keyword id="KW-0326">Glycosidase</keyword>
<keyword id="KW-0378">Hydrolase</keyword>
<keyword id="KW-0511">Multifunctional enzyme</keyword>
<keyword id="KW-0624">Polysaccharide degradation</keyword>
<keyword id="KW-0732">Signal</keyword>
<keyword id="KW-0858">Xylan degradation</keyword>
<gene>
    <name type="primary">xyl1</name>
</gene>
<protein>
    <recommendedName>
        <fullName>Arabinofuranosidase/B-xylosidase</fullName>
    </recommendedName>
    <domain>
        <recommendedName>
            <fullName>Alpha-L-arabinofuranosidase</fullName>
            <shortName>Arabinosidase</shortName>
            <ecNumber>3.2.1.55</ecNumber>
        </recommendedName>
    </domain>
    <domain>
        <recommendedName>
            <fullName>Beta-xylosidase</fullName>
            <ecNumber>3.2.1.37</ecNumber>
        </recommendedName>
        <alternativeName>
            <fullName>1,4-beta-D-xylan xylohydrolase</fullName>
        </alternativeName>
        <alternativeName>
            <fullName>Xylan 1,4-beta-xylosidase</fullName>
        </alternativeName>
    </domain>
</protein>
<evidence type="ECO:0000255" key="1"/>
<evidence type="ECO:0000305" key="2"/>
<comment type="catalytic activity">
    <reaction>
        <text>Hydrolysis of terminal non-reducing alpha-L-arabinofuranoside residues in alpha-L-arabinosides.</text>
        <dbReference type="EC" id="3.2.1.55"/>
    </reaction>
</comment>
<comment type="catalytic activity">
    <reaction>
        <text>Hydrolysis of (1-&gt;4)-beta-D-xylans, to remove successive D-xylose residues from the non-reducing termini.</text>
        <dbReference type="EC" id="3.2.1.37"/>
    </reaction>
</comment>
<comment type="similarity">
    <text evidence="2">Belongs to the glycosyl hydrolase 54 family.</text>
</comment>
<organism>
    <name type="scientific">Trichoderma koningii</name>
    <name type="common">Hypocrea koningii</name>
    <dbReference type="NCBI Taxonomy" id="97093"/>
    <lineage>
        <taxon>Eukaryota</taxon>
        <taxon>Fungi</taxon>
        <taxon>Dikarya</taxon>
        <taxon>Ascomycota</taxon>
        <taxon>Pezizomycotina</taxon>
        <taxon>Sordariomycetes</taxon>
        <taxon>Hypocreomycetidae</taxon>
        <taxon>Hypocreales</taxon>
        <taxon>Hypocreaceae</taxon>
        <taxon>Trichoderma</taxon>
    </lineage>
</organism>
<dbReference type="EC" id="3.2.1.55"/>
<dbReference type="EC" id="3.2.1.37"/>
<dbReference type="EMBL" id="U38661">
    <property type="protein sequence ID" value="AAA81024.1"/>
    <property type="molecule type" value="Genomic_DNA"/>
</dbReference>
<dbReference type="SMR" id="P48792"/>
<dbReference type="CAZy" id="CBM42">
    <property type="family name" value="Carbohydrate-Binding Module Family 42"/>
</dbReference>
<dbReference type="CAZy" id="GH54">
    <property type="family name" value="Glycoside Hydrolase Family 54"/>
</dbReference>
<dbReference type="GlyCosmos" id="P48792">
    <property type="glycosylation" value="1 site, No reported glycans"/>
</dbReference>
<dbReference type="GO" id="GO:0046556">
    <property type="term" value="F:alpha-L-arabinofuranosidase activity"/>
    <property type="evidence" value="ECO:0007669"/>
    <property type="project" value="UniProtKB-EC"/>
</dbReference>
<dbReference type="GO" id="GO:0009044">
    <property type="term" value="F:xylan 1,4-beta-xylosidase activity"/>
    <property type="evidence" value="ECO:0007669"/>
    <property type="project" value="UniProtKB-EC"/>
</dbReference>
<dbReference type="GO" id="GO:0031221">
    <property type="term" value="P:arabinan metabolic process"/>
    <property type="evidence" value="ECO:0007669"/>
    <property type="project" value="InterPro"/>
</dbReference>
<dbReference type="GO" id="GO:0046373">
    <property type="term" value="P:L-arabinose metabolic process"/>
    <property type="evidence" value="ECO:0007669"/>
    <property type="project" value="InterPro"/>
</dbReference>
<dbReference type="GO" id="GO:0045490">
    <property type="term" value="P:pectin catabolic process"/>
    <property type="evidence" value="ECO:0007669"/>
    <property type="project" value="TreeGrafter"/>
</dbReference>
<dbReference type="GO" id="GO:0045493">
    <property type="term" value="P:xylan catabolic process"/>
    <property type="evidence" value="ECO:0007669"/>
    <property type="project" value="UniProtKB-KW"/>
</dbReference>
<dbReference type="CDD" id="cd23399">
    <property type="entry name" value="beta-trefoil_ABD_ABFB"/>
    <property type="match status" value="1"/>
</dbReference>
<dbReference type="FunFam" id="2.60.120.200:FF:000131">
    <property type="entry name" value="Probable alpha-L-arabinofuranosidase B"/>
    <property type="match status" value="1"/>
</dbReference>
<dbReference type="FunFam" id="2.80.10.50:FF:000059">
    <property type="entry name" value="Probable alpha-L-arabinofuranosidase B"/>
    <property type="match status" value="1"/>
</dbReference>
<dbReference type="Gene3D" id="2.60.120.200">
    <property type="match status" value="1"/>
</dbReference>
<dbReference type="Gene3D" id="2.80.10.50">
    <property type="match status" value="1"/>
</dbReference>
<dbReference type="InterPro" id="IPR015289">
    <property type="entry name" value="A-L-arabinofuranosidase_B_cat"/>
</dbReference>
<dbReference type="InterPro" id="IPR038964">
    <property type="entry name" value="ABFB"/>
</dbReference>
<dbReference type="InterPro" id="IPR007934">
    <property type="entry name" value="AbfB_ABD"/>
</dbReference>
<dbReference type="InterPro" id="IPR036195">
    <property type="entry name" value="AbfB_ABD_sf"/>
</dbReference>
<dbReference type="InterPro" id="IPR013320">
    <property type="entry name" value="ConA-like_dom_sf"/>
</dbReference>
<dbReference type="PANTHER" id="PTHR39447">
    <property type="entry name" value="ALPHA-L-ARABINOFURANOSIDASE B"/>
    <property type="match status" value="1"/>
</dbReference>
<dbReference type="PANTHER" id="PTHR39447:SF2">
    <property type="entry name" value="ALPHA-L-ARABINOFURANOSIDASE B"/>
    <property type="match status" value="1"/>
</dbReference>
<dbReference type="Pfam" id="PF05270">
    <property type="entry name" value="AbfB"/>
    <property type="match status" value="1"/>
</dbReference>
<dbReference type="Pfam" id="PF09206">
    <property type="entry name" value="ArabFuran-catal"/>
    <property type="match status" value="1"/>
</dbReference>
<dbReference type="SUPFAM" id="SSF110221">
    <property type="entry name" value="AbfB domain"/>
    <property type="match status" value="1"/>
</dbReference>
<dbReference type="SUPFAM" id="SSF49899">
    <property type="entry name" value="Concanavalin A-like lectins/glucanases"/>
    <property type="match status" value="1"/>
</dbReference>